<keyword id="KW-1185">Reference proteome</keyword>
<keyword id="KW-0677">Repeat</keyword>
<keyword id="KW-0802">TPR repeat</keyword>
<reference key="1">
    <citation type="journal article" date="1996" name="Science">
        <title>Complete genome sequence of the methanogenic archaeon, Methanococcus jannaschii.</title>
        <authorList>
            <person name="Bult C.J."/>
            <person name="White O."/>
            <person name="Olsen G.J."/>
            <person name="Zhou L."/>
            <person name="Fleischmann R.D."/>
            <person name="Sutton G.G."/>
            <person name="Blake J.A."/>
            <person name="FitzGerald L.M."/>
            <person name="Clayton R.A."/>
            <person name="Gocayne J.D."/>
            <person name="Kerlavage A.R."/>
            <person name="Dougherty B.A."/>
            <person name="Tomb J.-F."/>
            <person name="Adams M.D."/>
            <person name="Reich C.I."/>
            <person name="Overbeek R."/>
            <person name="Kirkness E.F."/>
            <person name="Weinstock K.G."/>
            <person name="Merrick J.M."/>
            <person name="Glodek A."/>
            <person name="Scott J.L."/>
            <person name="Geoghagen N.S.M."/>
            <person name="Weidman J.F."/>
            <person name="Fuhrmann J.L."/>
            <person name="Nguyen D."/>
            <person name="Utterback T.R."/>
            <person name="Kelley J.M."/>
            <person name="Peterson J.D."/>
            <person name="Sadow P.W."/>
            <person name="Hanna M.C."/>
            <person name="Cotton M.D."/>
            <person name="Roberts K.M."/>
            <person name="Hurst M.A."/>
            <person name="Kaine B.P."/>
            <person name="Borodovsky M."/>
            <person name="Klenk H.-P."/>
            <person name="Fraser C.M."/>
            <person name="Smith H.O."/>
            <person name="Woese C.R."/>
            <person name="Venter J.C."/>
        </authorList>
    </citation>
    <scope>NUCLEOTIDE SEQUENCE [LARGE SCALE GENOMIC DNA]</scope>
    <source>
        <strain>ATCC 43067 / DSM 2661 / JAL-1 / JCM 10045 / NBRC 100440</strain>
    </source>
</reference>
<sequence length="86" mass="10258">MDENIKKAEYYYKKGVEVGNKGDVEKALEYFNKAIELNPFYRDAWFNKALALRILGRYEEARECFFRGLAVEKHLTHKKYNSDDEK</sequence>
<feature type="chain" id="PRO_0000106936" description="Uncharacterized protein MJ0572">
    <location>
        <begin position="1"/>
        <end position="86"/>
    </location>
</feature>
<feature type="repeat" description="TPR 1">
    <location>
        <begin position="8"/>
        <end position="41"/>
    </location>
</feature>
<feature type="repeat" description="TPR 2">
    <location>
        <begin position="42"/>
        <end position="75"/>
    </location>
</feature>
<name>Y572_METJA</name>
<dbReference type="EMBL" id="L77117">
    <property type="protein sequence ID" value="AAB98572.1"/>
    <property type="molecule type" value="Genomic_DNA"/>
</dbReference>
<dbReference type="PIR" id="D64371">
    <property type="entry name" value="D64371"/>
</dbReference>
<dbReference type="RefSeq" id="WP_010870076.1">
    <property type="nucleotide sequence ID" value="NC_000909.1"/>
</dbReference>
<dbReference type="SMR" id="Q57992"/>
<dbReference type="STRING" id="243232.MJ_0572"/>
<dbReference type="PaxDb" id="243232-MJ_0572"/>
<dbReference type="EnsemblBacteria" id="AAB98572">
    <property type="protein sequence ID" value="AAB98572"/>
    <property type="gene ID" value="MJ_0572"/>
</dbReference>
<dbReference type="GeneID" id="1451437"/>
<dbReference type="KEGG" id="mja:MJ_0572"/>
<dbReference type="eggNOG" id="arCOG03038">
    <property type="taxonomic scope" value="Archaea"/>
</dbReference>
<dbReference type="HOGENOM" id="CLU_2490514_0_0_2"/>
<dbReference type="InParanoid" id="Q57992"/>
<dbReference type="OrthoDB" id="115601at2157"/>
<dbReference type="PhylomeDB" id="Q57992"/>
<dbReference type="Proteomes" id="UP000000805">
    <property type="component" value="Chromosome"/>
</dbReference>
<dbReference type="Gene3D" id="1.25.40.10">
    <property type="entry name" value="Tetratricopeptide repeat domain"/>
    <property type="match status" value="1"/>
</dbReference>
<dbReference type="InterPro" id="IPR011990">
    <property type="entry name" value="TPR-like_helical_dom_sf"/>
</dbReference>
<dbReference type="InterPro" id="IPR019734">
    <property type="entry name" value="TPR_rpt"/>
</dbReference>
<dbReference type="InterPro" id="IPR051685">
    <property type="entry name" value="Ycf3/AcsC/BcsC/TPR_MFPF"/>
</dbReference>
<dbReference type="PANTHER" id="PTHR44943">
    <property type="entry name" value="CELLULOSE SYNTHASE OPERON PROTEIN C"/>
    <property type="match status" value="1"/>
</dbReference>
<dbReference type="PANTHER" id="PTHR44943:SF4">
    <property type="entry name" value="TPR REPEAT-CONTAINING PROTEIN MJ0798"/>
    <property type="match status" value="1"/>
</dbReference>
<dbReference type="Pfam" id="PF13432">
    <property type="entry name" value="TPR_16"/>
    <property type="match status" value="1"/>
</dbReference>
<dbReference type="SMART" id="SM00028">
    <property type="entry name" value="TPR"/>
    <property type="match status" value="2"/>
</dbReference>
<dbReference type="SUPFAM" id="SSF48452">
    <property type="entry name" value="TPR-like"/>
    <property type="match status" value="1"/>
</dbReference>
<dbReference type="PROSITE" id="PS50005">
    <property type="entry name" value="TPR"/>
    <property type="match status" value="2"/>
</dbReference>
<dbReference type="PROSITE" id="PS50293">
    <property type="entry name" value="TPR_REGION"/>
    <property type="match status" value="1"/>
</dbReference>
<protein>
    <recommendedName>
        <fullName>Uncharacterized protein MJ0572</fullName>
    </recommendedName>
</protein>
<proteinExistence type="predicted"/>
<organism>
    <name type="scientific">Methanocaldococcus jannaschii (strain ATCC 43067 / DSM 2661 / JAL-1 / JCM 10045 / NBRC 100440)</name>
    <name type="common">Methanococcus jannaschii</name>
    <dbReference type="NCBI Taxonomy" id="243232"/>
    <lineage>
        <taxon>Archaea</taxon>
        <taxon>Methanobacteriati</taxon>
        <taxon>Methanobacteriota</taxon>
        <taxon>Methanomada group</taxon>
        <taxon>Methanococci</taxon>
        <taxon>Methanococcales</taxon>
        <taxon>Methanocaldococcaceae</taxon>
        <taxon>Methanocaldococcus</taxon>
    </lineage>
</organism>
<gene>
    <name type="ordered locus">MJ0572</name>
</gene>
<accession>Q57992</accession>